<dbReference type="EC" id="1.4.99.-" evidence="1"/>
<dbReference type="EMBL" id="AP007255">
    <property type="protein sequence ID" value="BAE51603.1"/>
    <property type="molecule type" value="Genomic_DNA"/>
</dbReference>
<dbReference type="RefSeq" id="WP_011385177.1">
    <property type="nucleotide sequence ID" value="NC_007626.1"/>
</dbReference>
<dbReference type="SMR" id="Q2W3H2"/>
<dbReference type="STRING" id="342108.amb2799"/>
<dbReference type="KEGG" id="mag:amb2799"/>
<dbReference type="HOGENOM" id="CLU_007884_9_2_5"/>
<dbReference type="UniPathway" id="UPA00043">
    <property type="reaction ID" value="UER00498"/>
</dbReference>
<dbReference type="Proteomes" id="UP000007058">
    <property type="component" value="Chromosome"/>
</dbReference>
<dbReference type="GO" id="GO:0005737">
    <property type="term" value="C:cytoplasm"/>
    <property type="evidence" value="ECO:0007669"/>
    <property type="project" value="TreeGrafter"/>
</dbReference>
<dbReference type="GO" id="GO:0005886">
    <property type="term" value="C:plasma membrane"/>
    <property type="evidence" value="ECO:0007669"/>
    <property type="project" value="TreeGrafter"/>
</dbReference>
<dbReference type="GO" id="GO:0008718">
    <property type="term" value="F:D-amino-acid dehydrogenase activity"/>
    <property type="evidence" value="ECO:0007669"/>
    <property type="project" value="UniProtKB-UniRule"/>
</dbReference>
<dbReference type="GO" id="GO:0055130">
    <property type="term" value="P:D-alanine catabolic process"/>
    <property type="evidence" value="ECO:0007669"/>
    <property type="project" value="UniProtKB-UniPathway"/>
</dbReference>
<dbReference type="Gene3D" id="3.30.9.10">
    <property type="entry name" value="D-Amino Acid Oxidase, subunit A, domain 2"/>
    <property type="match status" value="1"/>
</dbReference>
<dbReference type="Gene3D" id="3.50.50.60">
    <property type="entry name" value="FAD/NAD(P)-binding domain"/>
    <property type="match status" value="2"/>
</dbReference>
<dbReference type="HAMAP" id="MF_01202">
    <property type="entry name" value="DadA"/>
    <property type="match status" value="1"/>
</dbReference>
<dbReference type="InterPro" id="IPR023080">
    <property type="entry name" value="DadA"/>
</dbReference>
<dbReference type="InterPro" id="IPR006076">
    <property type="entry name" value="FAD-dep_OxRdtase"/>
</dbReference>
<dbReference type="InterPro" id="IPR036188">
    <property type="entry name" value="FAD/NAD-bd_sf"/>
</dbReference>
<dbReference type="NCBIfam" id="NF001933">
    <property type="entry name" value="PRK00711.1"/>
    <property type="match status" value="1"/>
</dbReference>
<dbReference type="PANTHER" id="PTHR13847:SF280">
    <property type="entry name" value="D-AMINO ACID DEHYDROGENASE"/>
    <property type="match status" value="1"/>
</dbReference>
<dbReference type="PANTHER" id="PTHR13847">
    <property type="entry name" value="SARCOSINE DEHYDROGENASE-RELATED"/>
    <property type="match status" value="1"/>
</dbReference>
<dbReference type="Pfam" id="PF01266">
    <property type="entry name" value="DAO"/>
    <property type="match status" value="1"/>
</dbReference>
<dbReference type="SUPFAM" id="SSF54373">
    <property type="entry name" value="FAD-linked reductases, C-terminal domain"/>
    <property type="match status" value="1"/>
</dbReference>
<dbReference type="SUPFAM" id="SSF51905">
    <property type="entry name" value="FAD/NAD(P)-binding domain"/>
    <property type="match status" value="1"/>
</dbReference>
<reference key="1">
    <citation type="journal article" date="2005" name="DNA Res.">
        <title>Complete genome sequence of the facultative anaerobic magnetotactic bacterium Magnetospirillum sp. strain AMB-1.</title>
        <authorList>
            <person name="Matsunaga T."/>
            <person name="Okamura Y."/>
            <person name="Fukuda Y."/>
            <person name="Wahyudi A.T."/>
            <person name="Murase Y."/>
            <person name="Takeyama H."/>
        </authorList>
    </citation>
    <scope>NUCLEOTIDE SEQUENCE [LARGE SCALE GENOMIC DNA]</scope>
    <source>
        <strain>ATCC 700264 / AMB-1</strain>
    </source>
</reference>
<gene>
    <name evidence="1" type="primary">dadA</name>
    <name type="ordered locus">amb2799</name>
</gene>
<sequence length="422" mass="45716">MKVVVIGAGVVGTASAWYLAKAGHEVTVVDRREGAGLETSFANGGQISPCHAEPWANPSVLPKVLKWLGREDAPLLFRWNRWDPALWAWGLRFLANCSRSRAEINTERTLRVALYSRACLGELRAETGIAYDQQVRGILHVYRDGAEFEHACRAAEVMIRHGLRRLPRTPAECTAIEPALGAVQGELAGGIYTPDDESGDAHKFTRELAALAAAKGVEFRWNVPIQSLLADGDRVAGLATSDGTIRAESYVLAAGCDSPLLARPLGLRLPIIPAKGYSVTVPVDNHAGAPLVSITDDEHKMVYSRLGDRLRAAGTAEMAGYDRMPNPVRNRLILDNARRLFPDGGDFDRAEPWAGLRPVTPDSVPLLGATPLRNLWLNTGHGTLGWTMSCGSGRIVADLVSGRPSAISMDGLGIDRFTSYLW</sequence>
<name>DADA_PARM1</name>
<keyword id="KW-0274">FAD</keyword>
<keyword id="KW-0285">Flavoprotein</keyword>
<keyword id="KW-0560">Oxidoreductase</keyword>
<evidence type="ECO:0000255" key="1">
    <source>
        <dbReference type="HAMAP-Rule" id="MF_01202"/>
    </source>
</evidence>
<protein>
    <recommendedName>
        <fullName evidence="1">D-amino acid dehydrogenase</fullName>
        <ecNumber evidence="1">1.4.99.-</ecNumber>
    </recommendedName>
</protein>
<accession>Q2W3H2</accession>
<proteinExistence type="inferred from homology"/>
<organism>
    <name type="scientific">Paramagnetospirillum magneticum (strain ATCC 700264 / AMB-1)</name>
    <name type="common">Magnetospirillum magneticum</name>
    <dbReference type="NCBI Taxonomy" id="342108"/>
    <lineage>
        <taxon>Bacteria</taxon>
        <taxon>Pseudomonadati</taxon>
        <taxon>Pseudomonadota</taxon>
        <taxon>Alphaproteobacteria</taxon>
        <taxon>Rhodospirillales</taxon>
        <taxon>Magnetospirillaceae</taxon>
        <taxon>Paramagnetospirillum</taxon>
    </lineage>
</organism>
<comment type="function">
    <text evidence="1">Oxidative deamination of D-amino acids.</text>
</comment>
<comment type="catalytic activity">
    <reaction evidence="1">
        <text>a D-alpha-amino acid + A + H2O = a 2-oxocarboxylate + AH2 + NH4(+)</text>
        <dbReference type="Rhea" id="RHEA:18125"/>
        <dbReference type="ChEBI" id="CHEBI:13193"/>
        <dbReference type="ChEBI" id="CHEBI:15377"/>
        <dbReference type="ChEBI" id="CHEBI:17499"/>
        <dbReference type="ChEBI" id="CHEBI:28938"/>
        <dbReference type="ChEBI" id="CHEBI:35179"/>
        <dbReference type="ChEBI" id="CHEBI:59871"/>
    </reaction>
</comment>
<comment type="cofactor">
    <cofactor evidence="1">
        <name>FAD</name>
        <dbReference type="ChEBI" id="CHEBI:57692"/>
    </cofactor>
</comment>
<comment type="pathway">
    <text>Amino-acid degradation; D-alanine degradation; NH(3) and pyruvate from D-alanine: step 1/1.</text>
</comment>
<comment type="similarity">
    <text evidence="1">Belongs to the DadA oxidoreductase family.</text>
</comment>
<feature type="chain" id="PRO_1000066098" description="D-amino acid dehydrogenase">
    <location>
        <begin position="1"/>
        <end position="422"/>
    </location>
</feature>
<feature type="binding site" evidence="1">
    <location>
        <begin position="3"/>
        <end position="17"/>
    </location>
    <ligand>
        <name>FAD</name>
        <dbReference type="ChEBI" id="CHEBI:57692"/>
    </ligand>
</feature>